<dbReference type="EC" id="2.7.7.8" evidence="1"/>
<dbReference type="EMBL" id="CP000514">
    <property type="protein sequence ID" value="ABM20415.1"/>
    <property type="molecule type" value="Genomic_DNA"/>
</dbReference>
<dbReference type="SMR" id="A1U5Z6"/>
<dbReference type="STRING" id="351348.Maqu_3344"/>
<dbReference type="KEGG" id="maq:Maqu_3344"/>
<dbReference type="eggNOG" id="COG1185">
    <property type="taxonomic scope" value="Bacteria"/>
</dbReference>
<dbReference type="HOGENOM" id="CLU_004217_2_2_6"/>
<dbReference type="Proteomes" id="UP000000998">
    <property type="component" value="Chromosome"/>
</dbReference>
<dbReference type="GO" id="GO:0005829">
    <property type="term" value="C:cytosol"/>
    <property type="evidence" value="ECO:0007669"/>
    <property type="project" value="TreeGrafter"/>
</dbReference>
<dbReference type="GO" id="GO:0000175">
    <property type="term" value="F:3'-5'-RNA exonuclease activity"/>
    <property type="evidence" value="ECO:0007669"/>
    <property type="project" value="TreeGrafter"/>
</dbReference>
<dbReference type="GO" id="GO:0000287">
    <property type="term" value="F:magnesium ion binding"/>
    <property type="evidence" value="ECO:0007669"/>
    <property type="project" value="UniProtKB-UniRule"/>
</dbReference>
<dbReference type="GO" id="GO:0004654">
    <property type="term" value="F:polyribonucleotide nucleotidyltransferase activity"/>
    <property type="evidence" value="ECO:0007669"/>
    <property type="project" value="UniProtKB-UniRule"/>
</dbReference>
<dbReference type="GO" id="GO:0003723">
    <property type="term" value="F:RNA binding"/>
    <property type="evidence" value="ECO:0007669"/>
    <property type="project" value="UniProtKB-UniRule"/>
</dbReference>
<dbReference type="GO" id="GO:0006402">
    <property type="term" value="P:mRNA catabolic process"/>
    <property type="evidence" value="ECO:0007669"/>
    <property type="project" value="UniProtKB-UniRule"/>
</dbReference>
<dbReference type="GO" id="GO:0006396">
    <property type="term" value="P:RNA processing"/>
    <property type="evidence" value="ECO:0007669"/>
    <property type="project" value="InterPro"/>
</dbReference>
<dbReference type="CDD" id="cd02393">
    <property type="entry name" value="KH-I_PNPase"/>
    <property type="match status" value="1"/>
</dbReference>
<dbReference type="CDD" id="cd11363">
    <property type="entry name" value="RNase_PH_PNPase_1"/>
    <property type="match status" value="1"/>
</dbReference>
<dbReference type="CDD" id="cd11364">
    <property type="entry name" value="RNase_PH_PNPase_2"/>
    <property type="match status" value="1"/>
</dbReference>
<dbReference type="CDD" id="cd04472">
    <property type="entry name" value="S1_PNPase"/>
    <property type="match status" value="1"/>
</dbReference>
<dbReference type="FunFam" id="2.40.50.140:FF:000023">
    <property type="entry name" value="Polyribonucleotide nucleotidyltransferase"/>
    <property type="match status" value="1"/>
</dbReference>
<dbReference type="FunFam" id="3.30.1370.10:FF:000001">
    <property type="entry name" value="Polyribonucleotide nucleotidyltransferase"/>
    <property type="match status" value="1"/>
</dbReference>
<dbReference type="FunFam" id="3.30.230.70:FF:000001">
    <property type="entry name" value="Polyribonucleotide nucleotidyltransferase"/>
    <property type="match status" value="1"/>
</dbReference>
<dbReference type="FunFam" id="3.30.230.70:FF:000002">
    <property type="entry name" value="Polyribonucleotide nucleotidyltransferase"/>
    <property type="match status" value="1"/>
</dbReference>
<dbReference type="Gene3D" id="3.30.230.70">
    <property type="entry name" value="GHMP Kinase, N-terminal domain"/>
    <property type="match status" value="2"/>
</dbReference>
<dbReference type="Gene3D" id="3.30.1370.10">
    <property type="entry name" value="K Homology domain, type 1"/>
    <property type="match status" value="1"/>
</dbReference>
<dbReference type="Gene3D" id="2.40.50.140">
    <property type="entry name" value="Nucleic acid-binding proteins"/>
    <property type="match status" value="1"/>
</dbReference>
<dbReference type="HAMAP" id="MF_01595">
    <property type="entry name" value="PNPase"/>
    <property type="match status" value="1"/>
</dbReference>
<dbReference type="InterPro" id="IPR001247">
    <property type="entry name" value="ExoRNase_PH_dom1"/>
</dbReference>
<dbReference type="InterPro" id="IPR015847">
    <property type="entry name" value="ExoRNase_PH_dom2"/>
</dbReference>
<dbReference type="InterPro" id="IPR036345">
    <property type="entry name" value="ExoRNase_PH_dom2_sf"/>
</dbReference>
<dbReference type="InterPro" id="IPR004087">
    <property type="entry name" value="KH_dom"/>
</dbReference>
<dbReference type="InterPro" id="IPR004088">
    <property type="entry name" value="KH_dom_type_1"/>
</dbReference>
<dbReference type="InterPro" id="IPR036612">
    <property type="entry name" value="KH_dom_type_1_sf"/>
</dbReference>
<dbReference type="InterPro" id="IPR012340">
    <property type="entry name" value="NA-bd_OB-fold"/>
</dbReference>
<dbReference type="InterPro" id="IPR012162">
    <property type="entry name" value="PNPase"/>
</dbReference>
<dbReference type="InterPro" id="IPR027408">
    <property type="entry name" value="PNPase/RNase_PH_dom_sf"/>
</dbReference>
<dbReference type="InterPro" id="IPR015848">
    <property type="entry name" value="PNPase_PH_RNA-bd_bac/org-type"/>
</dbReference>
<dbReference type="InterPro" id="IPR036456">
    <property type="entry name" value="PNPase_PH_RNA-bd_sf"/>
</dbReference>
<dbReference type="InterPro" id="IPR020568">
    <property type="entry name" value="Ribosomal_Su5_D2-typ_SF"/>
</dbReference>
<dbReference type="InterPro" id="IPR003029">
    <property type="entry name" value="S1_domain"/>
</dbReference>
<dbReference type="NCBIfam" id="TIGR03591">
    <property type="entry name" value="polynuc_phos"/>
    <property type="match status" value="1"/>
</dbReference>
<dbReference type="NCBIfam" id="NF008805">
    <property type="entry name" value="PRK11824.1"/>
    <property type="match status" value="1"/>
</dbReference>
<dbReference type="PANTHER" id="PTHR11252">
    <property type="entry name" value="POLYRIBONUCLEOTIDE NUCLEOTIDYLTRANSFERASE"/>
    <property type="match status" value="1"/>
</dbReference>
<dbReference type="PANTHER" id="PTHR11252:SF0">
    <property type="entry name" value="POLYRIBONUCLEOTIDE NUCLEOTIDYLTRANSFERASE 1, MITOCHONDRIAL"/>
    <property type="match status" value="1"/>
</dbReference>
<dbReference type="Pfam" id="PF00013">
    <property type="entry name" value="KH_1"/>
    <property type="match status" value="1"/>
</dbReference>
<dbReference type="Pfam" id="PF03726">
    <property type="entry name" value="PNPase"/>
    <property type="match status" value="1"/>
</dbReference>
<dbReference type="Pfam" id="PF01138">
    <property type="entry name" value="RNase_PH"/>
    <property type="match status" value="2"/>
</dbReference>
<dbReference type="Pfam" id="PF03725">
    <property type="entry name" value="RNase_PH_C"/>
    <property type="match status" value="2"/>
</dbReference>
<dbReference type="Pfam" id="PF00575">
    <property type="entry name" value="S1"/>
    <property type="match status" value="1"/>
</dbReference>
<dbReference type="PIRSF" id="PIRSF005499">
    <property type="entry name" value="PNPase"/>
    <property type="match status" value="1"/>
</dbReference>
<dbReference type="SMART" id="SM00322">
    <property type="entry name" value="KH"/>
    <property type="match status" value="1"/>
</dbReference>
<dbReference type="SMART" id="SM00316">
    <property type="entry name" value="S1"/>
    <property type="match status" value="1"/>
</dbReference>
<dbReference type="SUPFAM" id="SSF54791">
    <property type="entry name" value="Eukaryotic type KH-domain (KH-domain type I)"/>
    <property type="match status" value="1"/>
</dbReference>
<dbReference type="SUPFAM" id="SSF50249">
    <property type="entry name" value="Nucleic acid-binding proteins"/>
    <property type="match status" value="1"/>
</dbReference>
<dbReference type="SUPFAM" id="SSF46915">
    <property type="entry name" value="Polynucleotide phosphorylase/guanosine pentaphosphate synthase (PNPase/GPSI), domain 3"/>
    <property type="match status" value="1"/>
</dbReference>
<dbReference type="SUPFAM" id="SSF55666">
    <property type="entry name" value="Ribonuclease PH domain 2-like"/>
    <property type="match status" value="2"/>
</dbReference>
<dbReference type="SUPFAM" id="SSF54211">
    <property type="entry name" value="Ribosomal protein S5 domain 2-like"/>
    <property type="match status" value="2"/>
</dbReference>
<dbReference type="PROSITE" id="PS50084">
    <property type="entry name" value="KH_TYPE_1"/>
    <property type="match status" value="1"/>
</dbReference>
<dbReference type="PROSITE" id="PS50126">
    <property type="entry name" value="S1"/>
    <property type="match status" value="1"/>
</dbReference>
<keyword id="KW-0963">Cytoplasm</keyword>
<keyword id="KW-0460">Magnesium</keyword>
<keyword id="KW-0479">Metal-binding</keyword>
<keyword id="KW-0548">Nucleotidyltransferase</keyword>
<keyword id="KW-0694">RNA-binding</keyword>
<keyword id="KW-0808">Transferase</keyword>
<sequence>MGHWPESKPLKMQEFIVELQPRIKTFEMGGETFTLETGRIARQATGAVLVSTGDTAVLGTVVGAKEPKPGQGFFPLTVNYQEKTYAAGKIPGGFFKREGRPSEKETLTSRLIDRPIRPLFPNGYMNEVQVVLTVMSASKNHDPDIAAMIAASAALAISGIPFDGPIGAARVGYTNEKGYFLNPTFEELSTSLLDMVVAGTDEAVLMVESEAKGLTEDQMLGAVLFGHQEMQTAITAIKEFAAENGKPRWEWQPEAENTELLNAIKAEFGGAIEEAYAIRDKMARYERLGEIKSAAVEKLAGEEEGQPSEEEVKKYFGKVEKSVVRLQVIEGKPRIDGRDNKTVRPIKVEVGVLPSVHGSALFTRGETQAIVTATLGTTRDVQIIDALEGERKDPFLFHYNFPPYSVGEAGRMGSPGRREIGHGRLAKRGVAAVMPTIEEFPYAIRAVSEITESNGSSSMASVCGSSLALMDAGVPLKAPVAGIAMGLVKEGDKFAVLTDILGDEDHLGDMDFKVAGTKEGVTALQMDIKIQGITDEIMEIALEQANAARLHILDEMNKVIAEPRAELSDRAPSITTIKIHPDKIRDVIGKGGATIRGICDETGASIDLDDDGNVKIYADNAAAAQAAVNRVKEITAEIEVGAIYKGRVERIVDFGAFVNILPGKDGLVHISQISERRIENVTDELSEGQEVLVKVLDVDNRGRVKLSMKEVKEGEQPTDFAD</sequence>
<proteinExistence type="inferred from homology"/>
<accession>A1U5Z6</accession>
<name>PNP_MARN8</name>
<gene>
    <name evidence="1" type="primary">pnp</name>
    <name type="ordered locus">Maqu_3344</name>
</gene>
<feature type="chain" id="PRO_0000329709" description="Polyribonucleotide nucleotidyltransferase">
    <location>
        <begin position="1"/>
        <end position="722"/>
    </location>
</feature>
<feature type="domain" description="KH" evidence="1">
    <location>
        <begin position="572"/>
        <end position="631"/>
    </location>
</feature>
<feature type="domain" description="S1 motif" evidence="1">
    <location>
        <begin position="641"/>
        <end position="709"/>
    </location>
</feature>
<feature type="binding site" evidence="1">
    <location>
        <position position="505"/>
    </location>
    <ligand>
        <name>Mg(2+)</name>
        <dbReference type="ChEBI" id="CHEBI:18420"/>
    </ligand>
</feature>
<feature type="binding site" evidence="1">
    <location>
        <position position="511"/>
    </location>
    <ligand>
        <name>Mg(2+)</name>
        <dbReference type="ChEBI" id="CHEBI:18420"/>
    </ligand>
</feature>
<reference key="1">
    <citation type="journal article" date="2011" name="Appl. Environ. Microbiol.">
        <title>Genomic potential of Marinobacter aquaeolei, a biogeochemical 'opportunitroph'.</title>
        <authorList>
            <person name="Singer E."/>
            <person name="Webb E.A."/>
            <person name="Nelson W.C."/>
            <person name="Heidelberg J.F."/>
            <person name="Ivanova N."/>
            <person name="Pati A."/>
            <person name="Edwards K.J."/>
        </authorList>
    </citation>
    <scope>NUCLEOTIDE SEQUENCE [LARGE SCALE GENOMIC DNA]</scope>
    <source>
        <strain>ATCC 700491 / DSM 11845 / VT8</strain>
    </source>
</reference>
<protein>
    <recommendedName>
        <fullName evidence="1">Polyribonucleotide nucleotidyltransferase</fullName>
        <ecNumber evidence="1">2.7.7.8</ecNumber>
    </recommendedName>
    <alternativeName>
        <fullName evidence="1">Polynucleotide phosphorylase</fullName>
        <shortName evidence="1">PNPase</shortName>
    </alternativeName>
</protein>
<comment type="function">
    <text evidence="1">Involved in mRNA degradation. Catalyzes the phosphorolysis of single-stranded polyribonucleotides processively in the 3'- to 5'-direction.</text>
</comment>
<comment type="catalytic activity">
    <reaction evidence="1">
        <text>RNA(n+1) + phosphate = RNA(n) + a ribonucleoside 5'-diphosphate</text>
        <dbReference type="Rhea" id="RHEA:22096"/>
        <dbReference type="Rhea" id="RHEA-COMP:14527"/>
        <dbReference type="Rhea" id="RHEA-COMP:17342"/>
        <dbReference type="ChEBI" id="CHEBI:43474"/>
        <dbReference type="ChEBI" id="CHEBI:57930"/>
        <dbReference type="ChEBI" id="CHEBI:140395"/>
        <dbReference type="EC" id="2.7.7.8"/>
    </reaction>
</comment>
<comment type="cofactor">
    <cofactor evidence="1">
        <name>Mg(2+)</name>
        <dbReference type="ChEBI" id="CHEBI:18420"/>
    </cofactor>
</comment>
<comment type="subunit">
    <text evidence="1">Component of the RNA degradosome, which is a multiprotein complex involved in RNA processing and mRNA degradation.</text>
</comment>
<comment type="subcellular location">
    <subcellularLocation>
        <location evidence="1">Cytoplasm</location>
    </subcellularLocation>
</comment>
<comment type="similarity">
    <text evidence="1">Belongs to the polyribonucleotide nucleotidyltransferase family.</text>
</comment>
<evidence type="ECO:0000255" key="1">
    <source>
        <dbReference type="HAMAP-Rule" id="MF_01595"/>
    </source>
</evidence>
<organism>
    <name type="scientific">Marinobacter nauticus (strain ATCC 700491 / DSM 11845 / VT8)</name>
    <name type="common">Marinobacter aquaeolei</name>
    <dbReference type="NCBI Taxonomy" id="351348"/>
    <lineage>
        <taxon>Bacteria</taxon>
        <taxon>Pseudomonadati</taxon>
        <taxon>Pseudomonadota</taxon>
        <taxon>Gammaproteobacteria</taxon>
        <taxon>Pseudomonadales</taxon>
        <taxon>Marinobacteraceae</taxon>
        <taxon>Marinobacter</taxon>
    </lineage>
</organism>